<sequence>MEAQGVAEGAGPGAASGVPHPAALAPAAAPTLAPASVAAAASQFTLLVMQPCAGQDEAAAPGGSVGAGKPVRYLCEGAGDGEEEAGEDEADLLDTSDPPGGGESAASLEDLEDEETHSGGEGSSGGARRRGSGGGSMSKTCTYEGCSETTSQVAKQRKPWMCKKHRNKMYKDKYKKKKSDQALNCGGTASTGSAGNVKLEESADNILSIVKQRTGSFGDRPARPTLLEQVLNQKRLSLLRSPEVVQFLQKQQQLLNQQVLEQRQQQFPGTSM</sequence>
<dbReference type="EMBL" id="Y12812">
    <property type="protein sequence ID" value="CAA73338.1"/>
    <property type="molecule type" value="Genomic_DNA"/>
</dbReference>
<dbReference type="EMBL" id="AK313912">
    <property type="protein sequence ID" value="BAG36635.1"/>
    <property type="molecule type" value="mRNA"/>
</dbReference>
<dbReference type="EMBL" id="AL159973">
    <property type="status" value="NOT_ANNOTATED_CDS"/>
    <property type="molecule type" value="Genomic_DNA"/>
</dbReference>
<dbReference type="EMBL" id="CH471075">
    <property type="protein sequence ID" value="EAX08575.1"/>
    <property type="molecule type" value="Genomic_DNA"/>
</dbReference>
<dbReference type="EMBL" id="BC026088">
    <property type="protein sequence ID" value="AAH26088.1"/>
    <property type="molecule type" value="mRNA"/>
</dbReference>
<dbReference type="CCDS" id="CCDS9359.1"/>
<dbReference type="RefSeq" id="NP_000529.1">
    <property type="nucleotide sequence ID" value="NM_000538.4"/>
</dbReference>
<dbReference type="PDB" id="2KW3">
    <property type="method" value="NMR"/>
    <property type="chains" value="C=214-272"/>
</dbReference>
<dbReference type="PDBsum" id="2KW3"/>
<dbReference type="SMR" id="O00287"/>
<dbReference type="BioGRID" id="111926">
    <property type="interactions" value="24"/>
</dbReference>
<dbReference type="ComplexPortal" id="CPX-6461">
    <property type="entry name" value="RFX gene regulatory complex"/>
</dbReference>
<dbReference type="CORUM" id="O00287"/>
<dbReference type="FunCoup" id="O00287">
    <property type="interactions" value="1549"/>
</dbReference>
<dbReference type="IntAct" id="O00287">
    <property type="interactions" value="15"/>
</dbReference>
<dbReference type="STRING" id="9606.ENSP00000255476"/>
<dbReference type="iPTMnet" id="O00287"/>
<dbReference type="PhosphoSitePlus" id="O00287"/>
<dbReference type="BioMuta" id="RFXAP"/>
<dbReference type="jPOST" id="O00287"/>
<dbReference type="MassIVE" id="O00287"/>
<dbReference type="PaxDb" id="9606-ENSP00000255476"/>
<dbReference type="PeptideAtlas" id="O00287"/>
<dbReference type="ProteomicsDB" id="47822"/>
<dbReference type="Pumba" id="O00287"/>
<dbReference type="Antibodypedia" id="8059">
    <property type="antibodies" value="180 antibodies from 24 providers"/>
</dbReference>
<dbReference type="DNASU" id="5994"/>
<dbReference type="Ensembl" id="ENST00000255476.3">
    <property type="protein sequence ID" value="ENSP00000255476.3"/>
    <property type="gene ID" value="ENSG00000133111.4"/>
</dbReference>
<dbReference type="GeneID" id="5994"/>
<dbReference type="KEGG" id="hsa:5994"/>
<dbReference type="MANE-Select" id="ENST00000255476.3">
    <property type="protein sequence ID" value="ENSP00000255476.3"/>
    <property type="RefSeq nucleotide sequence ID" value="NM_000538.4"/>
    <property type="RefSeq protein sequence ID" value="NP_000529.1"/>
</dbReference>
<dbReference type="UCSC" id="uc001uvu.2">
    <property type="organism name" value="human"/>
</dbReference>
<dbReference type="AGR" id="HGNC:9988"/>
<dbReference type="CTD" id="5994"/>
<dbReference type="DisGeNET" id="5994"/>
<dbReference type="GeneCards" id="RFXAP"/>
<dbReference type="HGNC" id="HGNC:9988">
    <property type="gene designation" value="RFXAP"/>
</dbReference>
<dbReference type="HPA" id="ENSG00000133111">
    <property type="expression patterns" value="Low tissue specificity"/>
</dbReference>
<dbReference type="MalaCards" id="RFXAP"/>
<dbReference type="MIM" id="601861">
    <property type="type" value="gene"/>
</dbReference>
<dbReference type="MIM" id="620817">
    <property type="type" value="phenotype"/>
</dbReference>
<dbReference type="neXtProt" id="NX_O00287"/>
<dbReference type="OpenTargets" id="ENSG00000133111"/>
<dbReference type="Orphanet" id="572">
    <property type="disease" value="Immunodeficiency by defective expression of MHC class II"/>
</dbReference>
<dbReference type="PharmGKB" id="PA34358"/>
<dbReference type="VEuPathDB" id="HostDB:ENSG00000133111"/>
<dbReference type="eggNOG" id="ENOG502S2J4">
    <property type="taxonomic scope" value="Eukaryota"/>
</dbReference>
<dbReference type="GeneTree" id="ENSGT00390000006573"/>
<dbReference type="HOGENOM" id="CLU_084944_0_0_1"/>
<dbReference type="InParanoid" id="O00287"/>
<dbReference type="OMA" id="HPCGGQD"/>
<dbReference type="OrthoDB" id="10065946at2759"/>
<dbReference type="PAN-GO" id="O00287">
    <property type="GO annotations" value="2 GO annotations based on evolutionary models"/>
</dbReference>
<dbReference type="PhylomeDB" id="O00287"/>
<dbReference type="TreeFam" id="TF332759"/>
<dbReference type="PathwayCommons" id="O00287"/>
<dbReference type="SignaLink" id="O00287"/>
<dbReference type="SIGNOR" id="O00287"/>
<dbReference type="BioGRID-ORCS" id="5994">
    <property type="hits" value="28 hits in 1151 CRISPR screens"/>
</dbReference>
<dbReference type="ChiTaRS" id="RFXAP">
    <property type="organism name" value="human"/>
</dbReference>
<dbReference type="EvolutionaryTrace" id="O00287"/>
<dbReference type="GeneWiki" id="RFXAP"/>
<dbReference type="GenomeRNAi" id="5994"/>
<dbReference type="Pharos" id="O00287">
    <property type="development level" value="Tbio"/>
</dbReference>
<dbReference type="PRO" id="PR:O00287"/>
<dbReference type="Proteomes" id="UP000005640">
    <property type="component" value="Chromosome 13"/>
</dbReference>
<dbReference type="RNAct" id="O00287">
    <property type="molecule type" value="protein"/>
</dbReference>
<dbReference type="Bgee" id="ENSG00000133111">
    <property type="expression patterns" value="Expressed in primordial germ cell in gonad and 154 other cell types or tissues"/>
</dbReference>
<dbReference type="GO" id="GO:0016607">
    <property type="term" value="C:nuclear speck"/>
    <property type="evidence" value="ECO:0000314"/>
    <property type="project" value="HPA"/>
</dbReference>
<dbReference type="GO" id="GO:0005634">
    <property type="term" value="C:nucleus"/>
    <property type="evidence" value="ECO:0000314"/>
    <property type="project" value="ComplexPortal"/>
</dbReference>
<dbReference type="GO" id="GO:0090575">
    <property type="term" value="C:RNA polymerase II transcription regulator complex"/>
    <property type="evidence" value="ECO:0000353"/>
    <property type="project" value="GO_Central"/>
</dbReference>
<dbReference type="GO" id="GO:0003677">
    <property type="term" value="F:DNA binding"/>
    <property type="evidence" value="ECO:0007669"/>
    <property type="project" value="UniProtKB-KW"/>
</dbReference>
<dbReference type="GO" id="GO:0045348">
    <property type="term" value="P:positive regulation of MHC class II biosynthetic process"/>
    <property type="evidence" value="ECO:0000303"/>
    <property type="project" value="ComplexPortal"/>
</dbReference>
<dbReference type="GO" id="GO:0045944">
    <property type="term" value="P:positive regulation of transcription by RNA polymerase II"/>
    <property type="evidence" value="ECO:0000314"/>
    <property type="project" value="GO_Central"/>
</dbReference>
<dbReference type="GO" id="GO:0006357">
    <property type="term" value="P:regulation of transcription by RNA polymerase II"/>
    <property type="evidence" value="ECO:0000318"/>
    <property type="project" value="GO_Central"/>
</dbReference>
<dbReference type="Gene3D" id="6.10.290.30">
    <property type="entry name" value="Regulatory factor X-associated C-terminal binding domain"/>
    <property type="match status" value="1"/>
</dbReference>
<dbReference type="IDEAL" id="IID00425"/>
<dbReference type="InterPro" id="IPR038308">
    <property type="entry name" value="RFXAP_C_sf"/>
</dbReference>
<dbReference type="InterPro" id="IPR029316">
    <property type="entry name" value="RFXAP_RFXANK-bd"/>
</dbReference>
<dbReference type="PANTHER" id="PTHR15110">
    <property type="entry name" value="REGULATORY FACTOR X-ASSOCIATED PROTEIN"/>
    <property type="match status" value="1"/>
</dbReference>
<dbReference type="PANTHER" id="PTHR15110:SF2">
    <property type="entry name" value="REGULATORY FACTOR X-ASSOCIATED PROTEIN"/>
    <property type="match status" value="1"/>
</dbReference>
<dbReference type="Pfam" id="PF15289">
    <property type="entry name" value="RFXA_RFXANK_bdg"/>
    <property type="match status" value="1"/>
</dbReference>
<gene>
    <name type="primary">RFXAP</name>
</gene>
<evidence type="ECO:0000255" key="1"/>
<evidence type="ECO:0000256" key="2">
    <source>
        <dbReference type="SAM" id="MobiDB-lite"/>
    </source>
</evidence>
<evidence type="ECO:0000269" key="3">
    <source>
    </source>
</evidence>
<evidence type="ECO:0000269" key="4">
    <source>
    </source>
</evidence>
<evidence type="ECO:0000269" key="5">
    <source>
    </source>
</evidence>
<evidence type="ECO:0000269" key="6">
    <source>
    </source>
</evidence>
<evidence type="ECO:0000305" key="7"/>
<evidence type="ECO:0007744" key="8">
    <source>
    </source>
</evidence>
<evidence type="ECO:0007829" key="9">
    <source>
        <dbReference type="PDB" id="2KW3"/>
    </source>
</evidence>
<organism>
    <name type="scientific">Homo sapiens</name>
    <name type="common">Human</name>
    <dbReference type="NCBI Taxonomy" id="9606"/>
    <lineage>
        <taxon>Eukaryota</taxon>
        <taxon>Metazoa</taxon>
        <taxon>Chordata</taxon>
        <taxon>Craniata</taxon>
        <taxon>Vertebrata</taxon>
        <taxon>Euteleostomi</taxon>
        <taxon>Mammalia</taxon>
        <taxon>Eutheria</taxon>
        <taxon>Euarchontoglires</taxon>
        <taxon>Primates</taxon>
        <taxon>Haplorrhini</taxon>
        <taxon>Catarrhini</taxon>
        <taxon>Hominidae</taxon>
        <taxon>Homo</taxon>
    </lineage>
</organism>
<reference key="1">
    <citation type="journal article" date="1997" name="EMBO J.">
        <title>RFXAP, a novel subunit of the RFX DNA binding complex is mutated in MHC class II deficiency.</title>
        <authorList>
            <person name="Durand B."/>
            <person name="Sperisen P."/>
            <person name="Emery P."/>
            <person name="Barras E."/>
            <person name="Zufferey M."/>
            <person name="Mach B."/>
            <person name="Reith W."/>
        </authorList>
    </citation>
    <scope>NUCLEOTIDE SEQUENCE [GENOMIC DNA]</scope>
    <scope>PARTIAL PROTEIN SEQUENCE</scope>
    <scope>INVOLVEMENT IN MHC2D4</scope>
</reference>
<reference key="2">
    <citation type="journal article" date="2004" name="Nat. Genet.">
        <title>Complete sequencing and characterization of 21,243 full-length human cDNAs.</title>
        <authorList>
            <person name="Ota T."/>
            <person name="Suzuki Y."/>
            <person name="Nishikawa T."/>
            <person name="Otsuki T."/>
            <person name="Sugiyama T."/>
            <person name="Irie R."/>
            <person name="Wakamatsu A."/>
            <person name="Hayashi K."/>
            <person name="Sato H."/>
            <person name="Nagai K."/>
            <person name="Kimura K."/>
            <person name="Makita H."/>
            <person name="Sekine M."/>
            <person name="Obayashi M."/>
            <person name="Nishi T."/>
            <person name="Shibahara T."/>
            <person name="Tanaka T."/>
            <person name="Ishii S."/>
            <person name="Yamamoto J."/>
            <person name="Saito K."/>
            <person name="Kawai Y."/>
            <person name="Isono Y."/>
            <person name="Nakamura Y."/>
            <person name="Nagahari K."/>
            <person name="Murakami K."/>
            <person name="Yasuda T."/>
            <person name="Iwayanagi T."/>
            <person name="Wagatsuma M."/>
            <person name="Shiratori A."/>
            <person name="Sudo H."/>
            <person name="Hosoiri T."/>
            <person name="Kaku Y."/>
            <person name="Kodaira H."/>
            <person name="Kondo H."/>
            <person name="Sugawara M."/>
            <person name="Takahashi M."/>
            <person name="Kanda K."/>
            <person name="Yokoi T."/>
            <person name="Furuya T."/>
            <person name="Kikkawa E."/>
            <person name="Omura Y."/>
            <person name="Abe K."/>
            <person name="Kamihara K."/>
            <person name="Katsuta N."/>
            <person name="Sato K."/>
            <person name="Tanikawa M."/>
            <person name="Yamazaki M."/>
            <person name="Ninomiya K."/>
            <person name="Ishibashi T."/>
            <person name="Yamashita H."/>
            <person name="Murakawa K."/>
            <person name="Fujimori K."/>
            <person name="Tanai H."/>
            <person name="Kimata M."/>
            <person name="Watanabe M."/>
            <person name="Hiraoka S."/>
            <person name="Chiba Y."/>
            <person name="Ishida S."/>
            <person name="Ono Y."/>
            <person name="Takiguchi S."/>
            <person name="Watanabe S."/>
            <person name="Yosida M."/>
            <person name="Hotuta T."/>
            <person name="Kusano J."/>
            <person name="Kanehori K."/>
            <person name="Takahashi-Fujii A."/>
            <person name="Hara H."/>
            <person name="Tanase T.-O."/>
            <person name="Nomura Y."/>
            <person name="Togiya S."/>
            <person name="Komai F."/>
            <person name="Hara R."/>
            <person name="Takeuchi K."/>
            <person name="Arita M."/>
            <person name="Imose N."/>
            <person name="Musashino K."/>
            <person name="Yuuki H."/>
            <person name="Oshima A."/>
            <person name="Sasaki N."/>
            <person name="Aotsuka S."/>
            <person name="Yoshikawa Y."/>
            <person name="Matsunawa H."/>
            <person name="Ichihara T."/>
            <person name="Shiohata N."/>
            <person name="Sano S."/>
            <person name="Moriya S."/>
            <person name="Momiyama H."/>
            <person name="Satoh N."/>
            <person name="Takami S."/>
            <person name="Terashima Y."/>
            <person name="Suzuki O."/>
            <person name="Nakagawa S."/>
            <person name="Senoh A."/>
            <person name="Mizoguchi H."/>
            <person name="Goto Y."/>
            <person name="Shimizu F."/>
            <person name="Wakebe H."/>
            <person name="Hishigaki H."/>
            <person name="Watanabe T."/>
            <person name="Sugiyama A."/>
            <person name="Takemoto M."/>
            <person name="Kawakami B."/>
            <person name="Yamazaki M."/>
            <person name="Watanabe K."/>
            <person name="Kumagai A."/>
            <person name="Itakura S."/>
            <person name="Fukuzumi Y."/>
            <person name="Fujimori Y."/>
            <person name="Komiyama M."/>
            <person name="Tashiro H."/>
            <person name="Tanigami A."/>
            <person name="Fujiwara T."/>
            <person name="Ono T."/>
            <person name="Yamada K."/>
            <person name="Fujii Y."/>
            <person name="Ozaki K."/>
            <person name="Hirao M."/>
            <person name="Ohmori Y."/>
            <person name="Kawabata A."/>
            <person name="Hikiji T."/>
            <person name="Kobatake N."/>
            <person name="Inagaki H."/>
            <person name="Ikema Y."/>
            <person name="Okamoto S."/>
            <person name="Okitani R."/>
            <person name="Kawakami T."/>
            <person name="Noguchi S."/>
            <person name="Itoh T."/>
            <person name="Shigeta K."/>
            <person name="Senba T."/>
            <person name="Matsumura K."/>
            <person name="Nakajima Y."/>
            <person name="Mizuno T."/>
            <person name="Morinaga M."/>
            <person name="Sasaki M."/>
            <person name="Togashi T."/>
            <person name="Oyama M."/>
            <person name="Hata H."/>
            <person name="Watanabe M."/>
            <person name="Komatsu T."/>
            <person name="Mizushima-Sugano J."/>
            <person name="Satoh T."/>
            <person name="Shirai Y."/>
            <person name="Takahashi Y."/>
            <person name="Nakagawa K."/>
            <person name="Okumura K."/>
            <person name="Nagase T."/>
            <person name="Nomura N."/>
            <person name="Kikuchi H."/>
            <person name="Masuho Y."/>
            <person name="Yamashita R."/>
            <person name="Nakai K."/>
            <person name="Yada T."/>
            <person name="Nakamura Y."/>
            <person name="Ohara O."/>
            <person name="Isogai T."/>
            <person name="Sugano S."/>
        </authorList>
    </citation>
    <scope>NUCLEOTIDE SEQUENCE [LARGE SCALE MRNA]</scope>
    <source>
        <tissue>Thalamus</tissue>
    </source>
</reference>
<reference key="3">
    <citation type="journal article" date="2004" name="Nature">
        <title>The DNA sequence and analysis of human chromosome 13.</title>
        <authorList>
            <person name="Dunham A."/>
            <person name="Matthews L.H."/>
            <person name="Burton J."/>
            <person name="Ashurst J.L."/>
            <person name="Howe K.L."/>
            <person name="Ashcroft K.J."/>
            <person name="Beare D.M."/>
            <person name="Burford D.C."/>
            <person name="Hunt S.E."/>
            <person name="Griffiths-Jones S."/>
            <person name="Jones M.C."/>
            <person name="Keenan S.J."/>
            <person name="Oliver K."/>
            <person name="Scott C.E."/>
            <person name="Ainscough R."/>
            <person name="Almeida J.P."/>
            <person name="Ambrose K.D."/>
            <person name="Andrews D.T."/>
            <person name="Ashwell R.I.S."/>
            <person name="Babbage A.K."/>
            <person name="Bagguley C.L."/>
            <person name="Bailey J."/>
            <person name="Bannerjee R."/>
            <person name="Barlow K.F."/>
            <person name="Bates K."/>
            <person name="Beasley H."/>
            <person name="Bird C.P."/>
            <person name="Bray-Allen S."/>
            <person name="Brown A.J."/>
            <person name="Brown J.Y."/>
            <person name="Burrill W."/>
            <person name="Carder C."/>
            <person name="Carter N.P."/>
            <person name="Chapman J.C."/>
            <person name="Clamp M.E."/>
            <person name="Clark S.Y."/>
            <person name="Clarke G."/>
            <person name="Clee C.M."/>
            <person name="Clegg S.C."/>
            <person name="Cobley V."/>
            <person name="Collins J.E."/>
            <person name="Corby N."/>
            <person name="Coville G.J."/>
            <person name="Deloukas P."/>
            <person name="Dhami P."/>
            <person name="Dunham I."/>
            <person name="Dunn M."/>
            <person name="Earthrowl M.E."/>
            <person name="Ellington A.G."/>
            <person name="Faulkner L."/>
            <person name="Frankish A.G."/>
            <person name="Frankland J."/>
            <person name="French L."/>
            <person name="Garner P."/>
            <person name="Garnett J."/>
            <person name="Gilbert J.G.R."/>
            <person name="Gilson C.J."/>
            <person name="Ghori J."/>
            <person name="Grafham D.V."/>
            <person name="Gribble S.M."/>
            <person name="Griffiths C."/>
            <person name="Hall R.E."/>
            <person name="Hammond S."/>
            <person name="Harley J.L."/>
            <person name="Hart E.A."/>
            <person name="Heath P.D."/>
            <person name="Howden P.J."/>
            <person name="Huckle E.J."/>
            <person name="Hunt P.J."/>
            <person name="Hunt A.R."/>
            <person name="Johnson C."/>
            <person name="Johnson D."/>
            <person name="Kay M."/>
            <person name="Kimberley A.M."/>
            <person name="King A."/>
            <person name="Laird G.K."/>
            <person name="Langford C.J."/>
            <person name="Lawlor S."/>
            <person name="Leongamornlert D.A."/>
            <person name="Lloyd D.M."/>
            <person name="Lloyd C."/>
            <person name="Loveland J.E."/>
            <person name="Lovell J."/>
            <person name="Martin S."/>
            <person name="Mashreghi-Mohammadi M."/>
            <person name="McLaren S.J."/>
            <person name="McMurray A."/>
            <person name="Milne S."/>
            <person name="Moore M.J.F."/>
            <person name="Nickerson T."/>
            <person name="Palmer S.A."/>
            <person name="Pearce A.V."/>
            <person name="Peck A.I."/>
            <person name="Pelan S."/>
            <person name="Phillimore B."/>
            <person name="Porter K.M."/>
            <person name="Rice C.M."/>
            <person name="Searle S."/>
            <person name="Sehra H.K."/>
            <person name="Shownkeen R."/>
            <person name="Skuce C.D."/>
            <person name="Smith M."/>
            <person name="Steward C.A."/>
            <person name="Sycamore N."/>
            <person name="Tester J."/>
            <person name="Thomas D.W."/>
            <person name="Tracey A."/>
            <person name="Tromans A."/>
            <person name="Tubby B."/>
            <person name="Wall M."/>
            <person name="Wallis J.M."/>
            <person name="West A.P."/>
            <person name="Whitehead S.L."/>
            <person name="Willey D.L."/>
            <person name="Wilming L."/>
            <person name="Wray P.W."/>
            <person name="Wright M.W."/>
            <person name="Young L."/>
            <person name="Coulson A."/>
            <person name="Durbin R.M."/>
            <person name="Hubbard T."/>
            <person name="Sulston J.E."/>
            <person name="Beck S."/>
            <person name="Bentley D.R."/>
            <person name="Rogers J."/>
            <person name="Ross M.T."/>
        </authorList>
    </citation>
    <scope>NUCLEOTIDE SEQUENCE [LARGE SCALE GENOMIC DNA]</scope>
</reference>
<reference key="4">
    <citation type="submission" date="2005-07" db="EMBL/GenBank/DDBJ databases">
        <authorList>
            <person name="Mural R.J."/>
            <person name="Istrail S."/>
            <person name="Sutton G.G."/>
            <person name="Florea L."/>
            <person name="Halpern A.L."/>
            <person name="Mobarry C.M."/>
            <person name="Lippert R."/>
            <person name="Walenz B."/>
            <person name="Shatkay H."/>
            <person name="Dew I."/>
            <person name="Miller J.R."/>
            <person name="Flanigan M.J."/>
            <person name="Edwards N.J."/>
            <person name="Bolanos R."/>
            <person name="Fasulo D."/>
            <person name="Halldorsson B.V."/>
            <person name="Hannenhalli S."/>
            <person name="Turner R."/>
            <person name="Yooseph S."/>
            <person name="Lu F."/>
            <person name="Nusskern D.R."/>
            <person name="Shue B.C."/>
            <person name="Zheng X.H."/>
            <person name="Zhong F."/>
            <person name="Delcher A.L."/>
            <person name="Huson D.H."/>
            <person name="Kravitz S.A."/>
            <person name="Mouchard L."/>
            <person name="Reinert K."/>
            <person name="Remington K.A."/>
            <person name="Clark A.G."/>
            <person name="Waterman M.S."/>
            <person name="Eichler E.E."/>
            <person name="Adams M.D."/>
            <person name="Hunkapiller M.W."/>
            <person name="Myers E.W."/>
            <person name="Venter J.C."/>
        </authorList>
    </citation>
    <scope>NUCLEOTIDE SEQUENCE [LARGE SCALE GENOMIC DNA]</scope>
</reference>
<reference key="5">
    <citation type="journal article" date="2004" name="Genome Res.">
        <title>The status, quality, and expansion of the NIH full-length cDNA project: the Mammalian Gene Collection (MGC).</title>
        <authorList>
            <consortium name="The MGC Project Team"/>
        </authorList>
    </citation>
    <scope>NUCLEOTIDE SEQUENCE [LARGE SCALE MRNA]</scope>
    <source>
        <tissue>Testis</tissue>
    </source>
</reference>
<reference key="6">
    <citation type="journal article" date="1999" name="Immunity">
        <title>RFX-B is the gene responsible for the most common cause of the bare lymphocyte syndrome, an MHC class II immunodeficiency.</title>
        <authorList>
            <person name="Nagarajan U.M."/>
            <person name="Louis-Plence P."/>
            <person name="DeSandro A."/>
            <person name="Nilsen R."/>
            <person name="Bushey A."/>
            <person name="Boss J.M."/>
        </authorList>
    </citation>
    <scope>PARTIAL PROTEIN SEQUENCE</scope>
    <scope>IDENTIFICATION BY MASS SPECTROMETRY</scope>
    <scope>INVOLVEMENT IN MHC2D4</scope>
    <source>
        <tissue>Lymphoblast</tissue>
    </source>
</reference>
<reference key="7">
    <citation type="journal article" date="1999" name="Immunity">
        <authorList>
            <person name="Nagarajan U.M."/>
            <person name="Louis-Plence P."/>
            <person name="DeSandro A."/>
            <person name="Nilsen R."/>
            <person name="Bushey A."/>
            <person name="Boss J.M."/>
        </authorList>
    </citation>
    <scope>ERRATUM OF PUBMED:10072068</scope>
</reference>
<reference key="8">
    <citation type="journal article" date="2017" name="Nat. Struct. Mol. Biol.">
        <title>Site-specific mapping of the human SUMO proteome reveals co-modification with phosphorylation.</title>
        <authorList>
            <person name="Hendriks I.A."/>
            <person name="Lyon D."/>
            <person name="Young C."/>
            <person name="Jensen L.J."/>
            <person name="Vertegaal A.C."/>
            <person name="Nielsen M.L."/>
        </authorList>
    </citation>
    <scope>SUMOYLATION [LARGE SCALE ANALYSIS] AT LYS-198</scope>
    <scope>IDENTIFICATION BY MASS SPECTROMETRY [LARGE SCALE ANALYSIS]</scope>
</reference>
<reference key="9">
    <citation type="journal article" date="2010" name="J. Mol. Biol.">
        <title>Solution structure of the heterotrimeric complex between the interaction domains of RFX5 and RFXAP from the RFX gene regulatory complex.</title>
        <authorList>
            <person name="Laird K.M."/>
            <person name="Briggs L.L."/>
            <person name="Boss J.M."/>
            <person name="Summers M.F."/>
            <person name="Garvie C.W."/>
        </authorList>
    </citation>
    <scope>STRUCTURE BY NMR OF 214-272</scope>
    <scope>SUBUNIT</scope>
    <scope>DOMAIN C-TERMINAL</scope>
</reference>
<reference key="10">
    <citation type="journal article" date="2023" name="J. Clin. Immunol.">
        <title>Clinical, Immunological, and Genetic Findings in Iranian Patients with MHC-II Deficiency: Confirmation of c.162delG RFXANK Founder Mutation in the Iranian Population.</title>
        <authorList>
            <person name="Mousavi Khorshidi M.S."/>
            <person name="Seeleuthner Y."/>
            <person name="Chavoshzadeh Z."/>
            <person name="Behfar M."/>
            <person name="Hamidieh A.A."/>
            <person name="Alimadadi H."/>
            <person name="Sherkat R."/>
            <person name="Momen T."/>
            <person name="Behniafard N."/>
            <person name="Eskandarzadeh S."/>
            <person name="Mansouri M."/>
            <person name="Behnam M."/>
            <person name="Mahdavi M."/>
            <person name="Heydarazad Zadeh M."/>
            <person name="Shokri M."/>
            <person name="Alizadeh F."/>
            <person name="Movahedi M."/>
            <person name="Momenilandi M."/>
            <person name="Keramatipour M."/>
            <person name="Casanova J.L."/>
            <person name="Cobat A."/>
            <person name="Abel L."/>
            <person name="Shahrooei M."/>
            <person name="Parvaneh N."/>
        </authorList>
    </citation>
    <scope>VARIANT MHC2D4 55-GLN--MET-272 DEL</scope>
    <scope>INVOLVEMENT IN MHC2D4</scope>
</reference>
<proteinExistence type="evidence at protein level"/>
<keyword id="KW-0002">3D-structure</keyword>
<keyword id="KW-0903">Direct protein sequencing</keyword>
<keyword id="KW-0225">Disease variant</keyword>
<keyword id="KW-0238">DNA-binding</keyword>
<keyword id="KW-1017">Isopeptide bond</keyword>
<keyword id="KW-0539">Nucleus</keyword>
<keyword id="KW-0597">Phosphoprotein</keyword>
<keyword id="KW-1267">Proteomics identification</keyword>
<keyword id="KW-1185">Reference proteome</keyword>
<keyword id="KW-0705">SCID</keyword>
<keyword id="KW-0832">Ubl conjugation</keyword>
<feature type="chain" id="PRO_0000097310" description="Regulatory factor X-associated protein">
    <location>
        <begin position="1"/>
        <end position="272"/>
    </location>
</feature>
<feature type="region of interest" description="Disordered" evidence="2">
    <location>
        <begin position="1"/>
        <end position="20"/>
    </location>
</feature>
<feature type="region of interest" description="Disordered" evidence="2">
    <location>
        <begin position="74"/>
        <end position="142"/>
    </location>
</feature>
<feature type="region of interest" description="Disordered" evidence="2">
    <location>
        <begin position="175"/>
        <end position="195"/>
    </location>
</feature>
<feature type="region of interest" description="C-terminal domain">
    <location>
        <begin position="214"/>
        <end position="270"/>
    </location>
</feature>
<feature type="short sequence motif" description="Nuclear localization signal" evidence="1">
    <location>
        <begin position="163"/>
        <end position="178"/>
    </location>
</feature>
<feature type="compositionally biased region" description="Acidic residues" evidence="2">
    <location>
        <begin position="79"/>
        <end position="94"/>
    </location>
</feature>
<feature type="cross-link" description="Glycyl lysine isopeptide (Lys-Gly) (interchain with G-Cter in SUMO2)" evidence="8">
    <location>
        <position position="198"/>
    </location>
</feature>
<feature type="sequence variant" id="VAR_089571" description="In MHC2D4; likely pathogenic." evidence="5">
    <location>
        <begin position="55"/>
        <end position="272"/>
    </location>
</feature>
<feature type="sequence conflict" description="In Ref. 5; AAH26088." evidence="7" ref="5">
    <original>G</original>
    <variation>S</variation>
    <location>
        <position position="5"/>
    </location>
</feature>
<feature type="helix" evidence="9">
    <location>
        <begin position="226"/>
        <end position="237"/>
    </location>
</feature>
<feature type="helix" evidence="9">
    <location>
        <begin position="242"/>
        <end position="258"/>
    </location>
</feature>
<name>RFXAP_HUMAN</name>
<protein>
    <recommendedName>
        <fullName>Regulatory factor X-associated protein</fullName>
        <shortName>RFX-associated protein</shortName>
    </recommendedName>
    <alternativeName>
        <fullName>RFX DNA-binding complex 36 kDa subunit</fullName>
    </alternativeName>
</protein>
<accession>O00287</accession>
<accession>B2R9T8</accession>
<accession>Q5VZM6</accession>
<accession>Q8TC40</accession>
<comment type="function">
    <text>Part of the RFX complex that binds to the X-box of MHC II promoters.</text>
</comment>
<comment type="subunit">
    <text evidence="4">The RFX heterotetrameric complex consists of 2 molecules of RFX5 and one each of RFXAP and RFX-B/RFXANK; with each subunit representing a separate complementation group. RFX forms cooperative DNA binding complexes with X2BP and CBF/NF-Y. RFX associates with CIITA to form an active transcriptional complex.</text>
</comment>
<comment type="interaction">
    <interactant intactId="EBI-3929296">
        <id>O00287</id>
    </interactant>
    <interactant intactId="EBI-923266">
        <id>P48382</id>
        <label>RFX5</label>
    </interactant>
    <organismsDiffer>false</organismsDiffer>
    <experiments>13</experiments>
</comment>
<comment type="interaction">
    <interactant intactId="EBI-3929296">
        <id>O00287</id>
    </interactant>
    <interactant intactId="EBI-1057665">
        <id>O14593</id>
        <label>RFXANK</label>
    </interactant>
    <organismsDiffer>false</organismsDiffer>
    <experiments>6</experiments>
</comment>
<comment type="subcellular location">
    <subcellularLocation>
        <location>Nucleus</location>
    </subcellularLocation>
</comment>
<comment type="tissue specificity">
    <text>Ubiquitous.</text>
</comment>
<comment type="domain">
    <text evidence="4">The C-terminal domain is necessary for the RFX complex formation.</text>
</comment>
<comment type="PTM">
    <text>Phosphorylated.</text>
</comment>
<comment type="disease" evidence="3 5 6">
    <disease id="DI-06908">
        <name>MHC class II deficiency 4</name>
        <acronym>MHC2D4</acronym>
        <description>An autosomal recessive disorder characterized by immunodeficiency, failure to thrive, and recurrent bacterial, viral, fungal and parasitic infections from birth, usually affecting the respiratory and gastrointestinal tract. Patients may die in infancy or early childhood.</description>
        <dbReference type="MIM" id="620817"/>
    </disease>
    <text>The disease is caused by variants affecting the gene represented in this entry.</text>
</comment>
<comment type="online information" name="RFXAPbase">
    <link uri="https://databases.lovd.nl/shared/genes/RFXAP"/>
    <text>RFXAP mutation db</text>
</comment>